<gene>
    <name evidence="6 8" type="primary">Ddc</name>
</gene>
<dbReference type="EC" id="4.1.1.28" evidence="3 4"/>
<dbReference type="EMBL" id="L33001">
    <property type="protein sequence ID" value="AAA40646.1"/>
    <property type="molecule type" value="Genomic_DNA"/>
</dbReference>
<dbReference type="EMBL" id="L32989">
    <property type="protein sequence ID" value="AAA40646.1"/>
    <property type="status" value="JOINED"/>
    <property type="molecule type" value="Genomic_DNA"/>
</dbReference>
<dbReference type="EMBL" id="L32990">
    <property type="protein sequence ID" value="AAA40646.1"/>
    <property type="status" value="JOINED"/>
    <property type="molecule type" value="Genomic_DNA"/>
</dbReference>
<dbReference type="EMBL" id="L32991">
    <property type="protein sequence ID" value="AAA40646.1"/>
    <property type="status" value="JOINED"/>
    <property type="molecule type" value="Genomic_DNA"/>
</dbReference>
<dbReference type="EMBL" id="L32992">
    <property type="protein sequence ID" value="AAA40646.1"/>
    <property type="status" value="JOINED"/>
    <property type="molecule type" value="Genomic_DNA"/>
</dbReference>
<dbReference type="EMBL" id="L32993">
    <property type="protein sequence ID" value="AAA40646.1"/>
    <property type="status" value="JOINED"/>
    <property type="molecule type" value="Genomic_DNA"/>
</dbReference>
<dbReference type="EMBL" id="L32994">
    <property type="protein sequence ID" value="AAA40646.1"/>
    <property type="status" value="JOINED"/>
    <property type="molecule type" value="Genomic_DNA"/>
</dbReference>
<dbReference type="EMBL" id="L32995">
    <property type="protein sequence ID" value="AAA40646.1"/>
    <property type="status" value="JOINED"/>
    <property type="molecule type" value="Genomic_DNA"/>
</dbReference>
<dbReference type="EMBL" id="L32996">
    <property type="protein sequence ID" value="AAA40646.1"/>
    <property type="status" value="JOINED"/>
    <property type="molecule type" value="Genomic_DNA"/>
</dbReference>
<dbReference type="EMBL" id="L32997">
    <property type="protein sequence ID" value="AAA40646.1"/>
    <property type="status" value="JOINED"/>
    <property type="molecule type" value="Genomic_DNA"/>
</dbReference>
<dbReference type="EMBL" id="L33003">
    <property type="protein sequence ID" value="AAA40646.1"/>
    <property type="status" value="JOINED"/>
    <property type="molecule type" value="Genomic_DNA"/>
</dbReference>
<dbReference type="EMBL" id="L32999">
    <property type="protein sequence ID" value="AAA40646.1"/>
    <property type="status" value="JOINED"/>
    <property type="molecule type" value="Genomic_DNA"/>
</dbReference>
<dbReference type="EMBL" id="L33000">
    <property type="protein sequence ID" value="AAA40646.1"/>
    <property type="status" value="JOINED"/>
    <property type="molecule type" value="Genomic_DNA"/>
</dbReference>
<dbReference type="EMBL" id="M27716">
    <property type="protein sequence ID" value="AAA41087.1"/>
    <property type="molecule type" value="mRNA"/>
</dbReference>
<dbReference type="EMBL" id="BC087032">
    <property type="protein sequence ID" value="AAH87032.1"/>
    <property type="molecule type" value="mRNA"/>
</dbReference>
<dbReference type="EMBL" id="L03417">
    <property type="protein sequence ID" value="AAA99905.1"/>
    <property type="molecule type" value="Genomic_DNA"/>
</dbReference>
<dbReference type="PIR" id="A33994">
    <property type="entry name" value="DCRTA"/>
</dbReference>
<dbReference type="RefSeq" id="NP_001257781.1">
    <property type="nucleotide sequence ID" value="NM_001270852.1"/>
</dbReference>
<dbReference type="RefSeq" id="NP_001257782.1">
    <property type="nucleotide sequence ID" value="NM_001270853.1"/>
</dbReference>
<dbReference type="RefSeq" id="NP_036677.1">
    <property type="nucleotide sequence ID" value="NM_012545.4"/>
</dbReference>
<dbReference type="RefSeq" id="XP_006251537.1">
    <property type="nucleotide sequence ID" value="XM_006251475.3"/>
</dbReference>
<dbReference type="RefSeq" id="XP_008768474.1">
    <property type="nucleotide sequence ID" value="XM_008770252.2"/>
</dbReference>
<dbReference type="RefSeq" id="XP_063128932.1">
    <property type="nucleotide sequence ID" value="XM_063272862.1"/>
</dbReference>
<dbReference type="SMR" id="P14173"/>
<dbReference type="BioGRID" id="246491">
    <property type="interactions" value="1"/>
</dbReference>
<dbReference type="CORUM" id="P14173"/>
<dbReference type="FunCoup" id="P14173">
    <property type="interactions" value="343"/>
</dbReference>
<dbReference type="IntAct" id="P14173">
    <property type="interactions" value="1"/>
</dbReference>
<dbReference type="STRING" id="10116.ENSRNOP00000005851"/>
<dbReference type="iPTMnet" id="P14173"/>
<dbReference type="PhosphoSitePlus" id="P14173"/>
<dbReference type="jPOST" id="P14173"/>
<dbReference type="PaxDb" id="10116-ENSRNOP00000064520"/>
<dbReference type="GeneID" id="24311"/>
<dbReference type="KEGG" id="rno:24311"/>
<dbReference type="UCSC" id="RGD:2494">
    <property type="organism name" value="rat"/>
</dbReference>
<dbReference type="AGR" id="RGD:2494"/>
<dbReference type="CTD" id="1644"/>
<dbReference type="RGD" id="2494">
    <property type="gene designation" value="Ddc"/>
</dbReference>
<dbReference type="VEuPathDB" id="HostDB:ENSRNOG00000004327"/>
<dbReference type="eggNOG" id="KOG0628">
    <property type="taxonomic scope" value="Eukaryota"/>
</dbReference>
<dbReference type="HOGENOM" id="CLU_011856_3_1_1"/>
<dbReference type="InParanoid" id="P14173"/>
<dbReference type="OrthoDB" id="29530at9989"/>
<dbReference type="PhylomeDB" id="P14173"/>
<dbReference type="TreeFam" id="TF313863"/>
<dbReference type="BioCyc" id="MetaCyc:MONOMER-15070"/>
<dbReference type="BRENDA" id="4.1.1.28">
    <property type="organism ID" value="5301"/>
</dbReference>
<dbReference type="Reactome" id="R-RNO-209905">
    <property type="pathway name" value="Catecholamine biosynthesis"/>
</dbReference>
<dbReference type="Reactome" id="R-RNO-209931">
    <property type="pathway name" value="Serotonin and melatonin biosynthesis"/>
</dbReference>
<dbReference type="SABIO-RK" id="P14173"/>
<dbReference type="UniPathway" id="UPA00747">
    <property type="reaction ID" value="UER00734"/>
</dbReference>
<dbReference type="PRO" id="PR:P14173"/>
<dbReference type="Proteomes" id="UP000002494">
    <property type="component" value="Chromosome 14"/>
</dbReference>
<dbReference type="Bgee" id="ENSRNOG00000004327">
    <property type="expression patterns" value="Expressed in duodenum and 16 other cell types or tissues"/>
</dbReference>
<dbReference type="ExpressionAtlas" id="P14173">
    <property type="expression patterns" value="baseline and differential"/>
</dbReference>
<dbReference type="GO" id="GO:0030424">
    <property type="term" value="C:axon"/>
    <property type="evidence" value="ECO:0000314"/>
    <property type="project" value="RGD"/>
</dbReference>
<dbReference type="GO" id="GO:0005737">
    <property type="term" value="C:cytoplasm"/>
    <property type="evidence" value="ECO:0000266"/>
    <property type="project" value="RGD"/>
</dbReference>
<dbReference type="GO" id="GO:0043025">
    <property type="term" value="C:neuronal cell body"/>
    <property type="evidence" value="ECO:0000314"/>
    <property type="project" value="RGD"/>
</dbReference>
<dbReference type="GO" id="GO:0008021">
    <property type="term" value="C:synaptic vesicle"/>
    <property type="evidence" value="ECO:0000314"/>
    <property type="project" value="RGD"/>
</dbReference>
<dbReference type="GO" id="GO:0036467">
    <property type="term" value="F:5-hydroxy-L-tryptophan decarboxylase activity"/>
    <property type="evidence" value="ECO:0000266"/>
    <property type="project" value="RGD"/>
</dbReference>
<dbReference type="GO" id="GO:0016597">
    <property type="term" value="F:amino acid binding"/>
    <property type="evidence" value="ECO:0000314"/>
    <property type="project" value="RGD"/>
</dbReference>
<dbReference type="GO" id="GO:0004058">
    <property type="term" value="F:aromatic-L-amino-acid decarboxylase activity"/>
    <property type="evidence" value="ECO:0000314"/>
    <property type="project" value="RGD"/>
</dbReference>
<dbReference type="GO" id="GO:0019899">
    <property type="term" value="F:enzyme binding"/>
    <property type="evidence" value="ECO:0000266"/>
    <property type="project" value="RGD"/>
</dbReference>
<dbReference type="GO" id="GO:0036468">
    <property type="term" value="F:L-dopa decarboxylase activity"/>
    <property type="evidence" value="ECO:0000266"/>
    <property type="project" value="RGD"/>
</dbReference>
<dbReference type="GO" id="GO:0019904">
    <property type="term" value="F:protein domain specific binding"/>
    <property type="evidence" value="ECO:0000353"/>
    <property type="project" value="RGD"/>
</dbReference>
<dbReference type="GO" id="GO:0030170">
    <property type="term" value="F:pyridoxal phosphate binding"/>
    <property type="evidence" value="ECO:0000314"/>
    <property type="project" value="RGD"/>
</dbReference>
<dbReference type="GO" id="GO:0015842">
    <property type="term" value="P:aminergic neurotransmitter loading into synaptic vesicle"/>
    <property type="evidence" value="ECO:0000314"/>
    <property type="project" value="RGD"/>
</dbReference>
<dbReference type="GO" id="GO:0006520">
    <property type="term" value="P:amino acid metabolic process"/>
    <property type="evidence" value="ECO:0007669"/>
    <property type="project" value="InterPro"/>
</dbReference>
<dbReference type="GO" id="GO:0019752">
    <property type="term" value="P:carboxylic acid metabolic process"/>
    <property type="evidence" value="ECO:0007669"/>
    <property type="project" value="InterPro"/>
</dbReference>
<dbReference type="GO" id="GO:0042423">
    <property type="term" value="P:catecholamine biosynthetic process"/>
    <property type="evidence" value="ECO:0000304"/>
    <property type="project" value="RGD"/>
</dbReference>
<dbReference type="GO" id="GO:0006584">
    <property type="term" value="P:catecholamine metabolic process"/>
    <property type="evidence" value="ECO:0000318"/>
    <property type="project" value="GO_Central"/>
</dbReference>
<dbReference type="GO" id="GO:0071312">
    <property type="term" value="P:cellular response to alkaloid"/>
    <property type="evidence" value="ECO:0000270"/>
    <property type="project" value="RGD"/>
</dbReference>
<dbReference type="GO" id="GO:0071363">
    <property type="term" value="P:cellular response to growth factor stimulus"/>
    <property type="evidence" value="ECO:0000270"/>
    <property type="project" value="RGD"/>
</dbReference>
<dbReference type="GO" id="GO:0071466">
    <property type="term" value="P:cellular response to xenobiotic stimulus"/>
    <property type="evidence" value="ECO:0000270"/>
    <property type="project" value="RGD"/>
</dbReference>
<dbReference type="GO" id="GO:0007623">
    <property type="term" value="P:circadian rhythm"/>
    <property type="evidence" value="ECO:0000270"/>
    <property type="project" value="RGD"/>
</dbReference>
<dbReference type="GO" id="GO:0042416">
    <property type="term" value="P:dopamine biosynthetic process"/>
    <property type="evidence" value="ECO:0000314"/>
    <property type="project" value="RGD"/>
</dbReference>
<dbReference type="GO" id="GO:0042417">
    <property type="term" value="P:dopamine metabolic process"/>
    <property type="evidence" value="ECO:0000304"/>
    <property type="project" value="RGD"/>
</dbReference>
<dbReference type="GO" id="GO:0010467">
    <property type="term" value="P:gene expression"/>
    <property type="evidence" value="ECO:0000266"/>
    <property type="project" value="RGD"/>
</dbReference>
<dbReference type="GO" id="GO:0033076">
    <property type="term" value="P:isoquinoline alkaloid metabolic process"/>
    <property type="evidence" value="ECO:0000270"/>
    <property type="project" value="RGD"/>
</dbReference>
<dbReference type="GO" id="GO:0001822">
    <property type="term" value="P:kidney development"/>
    <property type="evidence" value="ECO:0000266"/>
    <property type="project" value="RGD"/>
</dbReference>
<dbReference type="GO" id="GO:0052314">
    <property type="term" value="P:phytoalexin metabolic process"/>
    <property type="evidence" value="ECO:0000270"/>
    <property type="project" value="RGD"/>
</dbReference>
<dbReference type="GO" id="GO:0046684">
    <property type="term" value="P:response to pyrethroid"/>
    <property type="evidence" value="ECO:0000270"/>
    <property type="project" value="RGD"/>
</dbReference>
<dbReference type="GO" id="GO:0009636">
    <property type="term" value="P:response to toxic substance"/>
    <property type="evidence" value="ECO:0000266"/>
    <property type="project" value="RGD"/>
</dbReference>
<dbReference type="GO" id="GO:0042427">
    <property type="term" value="P:serotonin biosynthetic process"/>
    <property type="evidence" value="ECO:0000314"/>
    <property type="project" value="RGD"/>
</dbReference>
<dbReference type="CDD" id="cd06450">
    <property type="entry name" value="DOPA_deC_like"/>
    <property type="match status" value="1"/>
</dbReference>
<dbReference type="FunFam" id="1.20.1340.10:FF:000001">
    <property type="entry name" value="Histidine decarboxylase"/>
    <property type="match status" value="1"/>
</dbReference>
<dbReference type="FunFam" id="3.40.640.10:FF:000025">
    <property type="entry name" value="Histidine decarboxylase"/>
    <property type="match status" value="1"/>
</dbReference>
<dbReference type="FunFam" id="3.90.1150.10:FF:000018">
    <property type="entry name" value="Histidine decarboxylase"/>
    <property type="match status" value="1"/>
</dbReference>
<dbReference type="Gene3D" id="3.90.1150.10">
    <property type="entry name" value="Aspartate Aminotransferase, domain 1"/>
    <property type="match status" value="1"/>
</dbReference>
<dbReference type="Gene3D" id="1.20.1340.10">
    <property type="entry name" value="dopa decarboxylase, N-terminal domain"/>
    <property type="match status" value="1"/>
</dbReference>
<dbReference type="Gene3D" id="3.40.640.10">
    <property type="entry name" value="Type I PLP-dependent aspartate aminotransferase-like (Major domain)"/>
    <property type="match status" value="1"/>
</dbReference>
<dbReference type="InterPro" id="IPR010977">
    <property type="entry name" value="Aromatic_deC"/>
</dbReference>
<dbReference type="InterPro" id="IPR002129">
    <property type="entry name" value="PyrdxlP-dep_de-COase"/>
</dbReference>
<dbReference type="InterPro" id="IPR015424">
    <property type="entry name" value="PyrdxlP-dep_Trfase"/>
</dbReference>
<dbReference type="InterPro" id="IPR015421">
    <property type="entry name" value="PyrdxlP-dep_Trfase_major"/>
</dbReference>
<dbReference type="InterPro" id="IPR015422">
    <property type="entry name" value="PyrdxlP-dep_Trfase_small"/>
</dbReference>
<dbReference type="InterPro" id="IPR021115">
    <property type="entry name" value="Pyridoxal-P_BS"/>
</dbReference>
<dbReference type="PANTHER" id="PTHR11999:SF167">
    <property type="entry name" value="AROMATIC-L-AMINO-ACID DECARBOXYLASE"/>
    <property type="match status" value="1"/>
</dbReference>
<dbReference type="PANTHER" id="PTHR11999">
    <property type="entry name" value="GROUP II PYRIDOXAL-5-PHOSPHATE DECARBOXYLASE"/>
    <property type="match status" value="1"/>
</dbReference>
<dbReference type="Pfam" id="PF00282">
    <property type="entry name" value="Pyridoxal_deC"/>
    <property type="match status" value="1"/>
</dbReference>
<dbReference type="PRINTS" id="PR00800">
    <property type="entry name" value="YHDCRBOXLASE"/>
</dbReference>
<dbReference type="SUPFAM" id="SSF53383">
    <property type="entry name" value="PLP-dependent transferases"/>
    <property type="match status" value="1"/>
</dbReference>
<dbReference type="PROSITE" id="PS00392">
    <property type="entry name" value="DDC_GAD_HDC_YDC"/>
    <property type="match status" value="1"/>
</dbReference>
<reference key="1">
    <citation type="journal article" date="1989" name="Proc. Natl. Acad. Sci. U.S.A.">
        <title>Molecular cloning and sequencing of a cDNA of rat dopa decarboxylase: partial amino acid homologies with other enzymes synthesizing catecholamines.</title>
        <authorList>
            <person name="Tanaka T."/>
            <person name="Horio Y."/>
            <person name="Taketoshi M."/>
            <person name="Imamura I."/>
            <person name="Ando-Yamamoto M."/>
            <person name="Kangawa K."/>
            <person name="Matsuo H."/>
            <person name="Kurodo M."/>
            <person name="Wada H."/>
        </authorList>
    </citation>
    <scope>NUCLEOTIDE SEQUENCE [MRNA]</scope>
    <source>
        <tissue>Liver</tissue>
    </source>
</reference>
<reference key="2">
    <citation type="journal article" date="2004" name="Genome Res.">
        <title>The status, quality, and expansion of the NIH full-length cDNA project: the Mammalian Gene Collection (MGC).</title>
        <authorList>
            <consortium name="The MGC Project Team"/>
        </authorList>
    </citation>
    <scope>NUCLEOTIDE SEQUENCE [LARGE SCALE MRNA]</scope>
    <source>
        <tissue>Lung</tissue>
    </source>
</reference>
<reference key="3">
    <citation type="journal article" date="1992" name="Proc. Natl. Acad. Sci. U.S.A.">
        <title>Distinct promoters direct neuronal and nonneuronal expression of rat aromatic L-amino acid decarboxylase.</title>
        <authorList>
            <person name="Albert V.R."/>
            <person name="Lee M.R."/>
            <person name="Bolden A.H."/>
            <person name="Wurzburger R.J."/>
            <person name="Aguanno A."/>
        </authorList>
    </citation>
    <scope>NUCLEOTIDE SEQUENCE [GENOMIC DNA] OF 1-67</scope>
    <source>
        <strain>Sprague-Dawley</strain>
    </source>
</reference>
<reference key="4">
    <citation type="journal article" date="1996" name="J. Biochem.">
        <title>Functionally important residues of aromatic L-amino acid decarboxylase probed by sequence alignment and site-directed mutagenesis.</title>
        <authorList>
            <person name="Ishii S."/>
            <person name="Mizugichi H."/>
            <person name="Nishino J."/>
            <person name="Hayashi H."/>
            <person name="Kagamiyama H."/>
        </authorList>
    </citation>
    <scope>FUNCTION</scope>
    <scope>CATALYTIC ACTIVITY</scope>
    <scope>PATHWAY</scope>
    <scope>MUTAGENESIS OF HIS-192; ASP-252; ASP-271; SER-296; LYS-303; TYR-332 AND ARG-355</scope>
    <scope>COFACTOR</scope>
</reference>
<reference key="5">
    <citation type="journal article" date="2001" name="Eur. J. Biochem.">
        <title>Mutation of residues in the coenzyme binding pocket of Dopa decarboxylase. Effects on catalytic properties.</title>
        <authorList>
            <person name="Bertoldi M."/>
            <person name="Castellani S."/>
            <person name="Bori Voltattorni C."/>
        </authorList>
    </citation>
    <scope>FUNCTION</scope>
    <scope>CATALYTIC ACTIVITY</scope>
    <scope>PATHWAY</scope>
    <scope>MUTAGENESIS OF HIS-192; ASP-271; ASN-300 AND HIS-302</scope>
</reference>
<feature type="chain" id="PRO_0000146942" description="Aromatic-L-amino-acid decarboxylase">
    <location>
        <begin position="1"/>
        <end position="480"/>
    </location>
</feature>
<feature type="repeat" description="1">
    <location>
        <begin position="58"/>
        <end position="115"/>
    </location>
</feature>
<feature type="repeat" description="2">
    <location>
        <begin position="118"/>
        <end position="178"/>
    </location>
</feature>
<feature type="region of interest" description="2 X approximate tandem repeats">
    <location>
        <begin position="58"/>
        <end position="178"/>
    </location>
</feature>
<feature type="binding site" evidence="2">
    <location>
        <position position="82"/>
    </location>
    <ligand>
        <name>substrate</name>
    </ligand>
</feature>
<feature type="binding site" evidence="1">
    <location>
        <position position="148"/>
    </location>
    <ligand>
        <name>pyridoxal 5'-phosphate</name>
        <dbReference type="ChEBI" id="CHEBI:597326"/>
    </ligand>
</feature>
<feature type="binding site" evidence="1">
    <location>
        <position position="149"/>
    </location>
    <ligand>
        <name>pyridoxal 5'-phosphate</name>
        <dbReference type="ChEBI" id="CHEBI:597326"/>
    </ligand>
</feature>
<feature type="binding site" evidence="2">
    <location>
        <position position="192"/>
    </location>
    <ligand>
        <name>substrate</name>
    </ligand>
</feature>
<feature type="binding site" evidence="1">
    <location>
        <position position="246"/>
    </location>
    <ligand>
        <name>pyridoxal 5'-phosphate</name>
        <dbReference type="ChEBI" id="CHEBI:597326"/>
    </ligand>
</feature>
<feature type="binding site" evidence="1">
    <location>
        <position position="300"/>
    </location>
    <ligand>
        <name>pyridoxal 5'-phosphate</name>
        <dbReference type="ChEBI" id="CHEBI:597326"/>
    </ligand>
</feature>
<feature type="modified residue" description="N-acetylmethionine" evidence="2">
    <location>
        <position position="1"/>
    </location>
</feature>
<feature type="modified residue" description="N6-(pyridoxal phosphate)lysine">
    <location>
        <position position="303"/>
    </location>
</feature>
<feature type="mutagenesis site" description="Abolishes decarboxylase activity." evidence="3 4">
    <original>H</original>
    <variation>A</variation>
    <location>
        <position position="192"/>
    </location>
</feature>
<feature type="mutagenesis site" description="Reduces decarboxylase activity by 96%." evidence="3 4">
    <original>H</original>
    <variation>Q</variation>
    <location>
        <position position="192"/>
    </location>
</feature>
<feature type="mutagenesis site" description="Abolishes decarboxylase activity." evidence="4">
    <original>D</original>
    <variation>A</variation>
    <variation>E</variation>
    <location>
        <position position="252"/>
    </location>
</feature>
<feature type="mutagenesis site" description="Abolishes decarboxylase activity." evidence="3 4">
    <original>D</original>
    <variation>A</variation>
    <location>
        <position position="271"/>
    </location>
</feature>
<feature type="mutagenesis site" description="Reduces decarboxylase activity by 65%." evidence="3 4">
    <original>D</original>
    <variation>E</variation>
    <location>
        <position position="271"/>
    </location>
</feature>
<feature type="mutagenesis site" description="Abolishes decarboxylase activity." evidence="4">
    <original>S</original>
    <variation>A</variation>
    <location>
        <position position="296"/>
    </location>
</feature>
<feature type="mutagenesis site" description="Reduces decarboxylase activity by 75%." evidence="3">
    <original>N</original>
    <variation>A</variation>
    <location>
        <position position="300"/>
    </location>
</feature>
<feature type="mutagenesis site" description="Reduces decarboxylase activity by 99.8%." evidence="3">
    <original>H</original>
    <variation>Q</variation>
    <location>
        <position position="302"/>
    </location>
</feature>
<feature type="mutagenesis site" description="Abolishes decarboxylase activity." evidence="4">
    <original>K</original>
    <variation>A</variation>
    <variation>R</variation>
    <location>
        <position position="303"/>
    </location>
</feature>
<feature type="mutagenesis site" description="Abolishes decarboxylase activity." evidence="4">
    <original>Y</original>
    <variation>A</variation>
    <variation>F</variation>
    <location>
        <position position="332"/>
    </location>
</feature>
<feature type="mutagenesis site" description="Abolishes decarboxylase activity." evidence="4">
    <original>R</original>
    <variation>A</variation>
    <location>
        <position position="355"/>
    </location>
</feature>
<feature type="mutagenesis site" description="No effect." evidence="4">
    <original>R</original>
    <variation>K</variation>
    <location>
        <position position="355"/>
    </location>
</feature>
<name>DDC_RAT</name>
<accession>P14173</accession>
<accession>Q6LEG4</accession>
<evidence type="ECO:0000250" key="1">
    <source>
        <dbReference type="UniProtKB" id="P20711"/>
    </source>
</evidence>
<evidence type="ECO:0000250" key="2">
    <source>
        <dbReference type="UniProtKB" id="P80041"/>
    </source>
</evidence>
<evidence type="ECO:0000269" key="3">
    <source>
    </source>
</evidence>
<evidence type="ECO:0000269" key="4">
    <source>
    </source>
</evidence>
<evidence type="ECO:0000303" key="5">
    <source>
    </source>
</evidence>
<evidence type="ECO:0000303" key="6">
    <source>
    </source>
</evidence>
<evidence type="ECO:0000305" key="7"/>
<evidence type="ECO:0000312" key="8">
    <source>
        <dbReference type="RGD" id="2494"/>
    </source>
</evidence>
<keyword id="KW-0007">Acetylation</keyword>
<keyword id="KW-0127">Catecholamine biosynthesis</keyword>
<keyword id="KW-0210">Decarboxylase</keyword>
<keyword id="KW-0456">Lyase</keyword>
<keyword id="KW-0663">Pyridoxal phosphate</keyword>
<keyword id="KW-1185">Reference proteome</keyword>
<keyword id="KW-0677">Repeat</keyword>
<organism>
    <name type="scientific">Rattus norvegicus</name>
    <name type="common">Rat</name>
    <dbReference type="NCBI Taxonomy" id="10116"/>
    <lineage>
        <taxon>Eukaryota</taxon>
        <taxon>Metazoa</taxon>
        <taxon>Chordata</taxon>
        <taxon>Craniata</taxon>
        <taxon>Vertebrata</taxon>
        <taxon>Euteleostomi</taxon>
        <taxon>Mammalia</taxon>
        <taxon>Eutheria</taxon>
        <taxon>Euarchontoglires</taxon>
        <taxon>Glires</taxon>
        <taxon>Rodentia</taxon>
        <taxon>Myomorpha</taxon>
        <taxon>Muroidea</taxon>
        <taxon>Muridae</taxon>
        <taxon>Murinae</taxon>
        <taxon>Rattus</taxon>
    </lineage>
</organism>
<protein>
    <recommendedName>
        <fullName>Aromatic-L-amino-acid decarboxylase</fullName>
        <shortName>AADC</shortName>
        <ecNumber evidence="3 4">4.1.1.28</ecNumber>
    </recommendedName>
    <alternativeName>
        <fullName evidence="5">DOPA decarboxylase</fullName>
        <shortName evidence="6">DDC</shortName>
    </alternativeName>
</protein>
<comment type="function">
    <text evidence="3 4">Catalyzes the decarboxylation of L-3,4-dihydroxyphenylalanine (DOPA) to dopamine and L-5-hydroxytryptophan to serotonin.</text>
</comment>
<comment type="catalytic activity">
    <reaction evidence="3 4">
        <text>L-dopa + H(+) = dopamine + CO2</text>
        <dbReference type="Rhea" id="RHEA:12272"/>
        <dbReference type="ChEBI" id="CHEBI:15378"/>
        <dbReference type="ChEBI" id="CHEBI:16526"/>
        <dbReference type="ChEBI" id="CHEBI:57504"/>
        <dbReference type="ChEBI" id="CHEBI:59905"/>
        <dbReference type="EC" id="4.1.1.28"/>
    </reaction>
    <physiologicalReaction direction="left-to-right" evidence="3 4">
        <dbReference type="Rhea" id="RHEA:12273"/>
    </physiologicalReaction>
</comment>
<comment type="catalytic activity">
    <reaction evidence="3 4">
        <text>5-hydroxy-L-tryptophan + H(+) = serotonin + CO2</text>
        <dbReference type="Rhea" id="RHEA:18533"/>
        <dbReference type="ChEBI" id="CHEBI:15378"/>
        <dbReference type="ChEBI" id="CHEBI:16526"/>
        <dbReference type="ChEBI" id="CHEBI:58266"/>
        <dbReference type="ChEBI" id="CHEBI:350546"/>
        <dbReference type="EC" id="4.1.1.28"/>
    </reaction>
    <physiologicalReaction direction="left-to-right" evidence="3 4">
        <dbReference type="Rhea" id="RHEA:18534"/>
    </physiologicalReaction>
</comment>
<comment type="cofactor">
    <cofactor evidence="4">
        <name>pyridoxal 5'-phosphate</name>
        <dbReference type="ChEBI" id="CHEBI:597326"/>
    </cofactor>
</comment>
<comment type="pathway">
    <text evidence="3 4">Catecholamine biosynthesis; dopamine biosynthesis; dopamine from L-tyrosine: step 2/2.</text>
</comment>
<comment type="subunit">
    <text evidence="1">Homodimer.</text>
</comment>
<comment type="similarity">
    <text evidence="7">Belongs to the group II decarboxylase family.</text>
</comment>
<sequence length="480" mass="54053">MDSREFRRRGKEMVDYIADYLDGIEGRPVYPDVEPGYLRALIPTTAPQEPETYEDIIRDIEKIIMPGVTHWHSPYFFAYFPTASSYPAMLADMLCGAIGCIGFSWAASPACTELETVMMDWLGKMLELPEAFLAGRAGEGGGVIQGSASEATLVALLAARTKMIRQLQAASPELTQAALMEKLVAYTSDQAHSSVERAGLIGGVKIKAIPSDGNYSMRAAALREALERDKAAGLIPFFVVVTLGTTSCCSFDNLLEVGPICNQEGVWLHIDAAYAGSAFICPEFRYLLNGVEFADSFNFNPHKWLLVNFDCSAMWVKKRTDLTEAFNMDPVYLRHSHQDSGLITDYRHWQIPLGRRFRSLKMWFVFRMYGVKGLQAYIRKHVKLSHEFESLVRQDPRFEICTEVILGLVCFRLKGSNQLNETLLQRINSAKKIHLVPCRLRDKFVLRFAVCSRTVESAHVQLAWEHIRDLASSVLRAEKE</sequence>
<proteinExistence type="evidence at protein level"/>